<reference key="1">
    <citation type="journal article" date="1996" name="DNA Res.">
        <title>A 570-kb DNA sequence of the Escherichia coli K-12 genome corresponding to the 28.0-40.1 min region on the linkage map.</title>
        <authorList>
            <person name="Aiba H."/>
            <person name="Baba T."/>
            <person name="Fujita K."/>
            <person name="Hayashi K."/>
            <person name="Inada T."/>
            <person name="Isono K."/>
            <person name="Itoh T."/>
            <person name="Kasai H."/>
            <person name="Kashimoto K."/>
            <person name="Kimura S."/>
            <person name="Kitakawa M."/>
            <person name="Kitagawa M."/>
            <person name="Makino K."/>
            <person name="Miki T."/>
            <person name="Mizobuchi K."/>
            <person name="Mori H."/>
            <person name="Mori T."/>
            <person name="Motomura K."/>
            <person name="Nakade S."/>
            <person name="Nakamura Y."/>
            <person name="Nashimoto H."/>
            <person name="Nishio Y."/>
            <person name="Oshima T."/>
            <person name="Saito N."/>
            <person name="Sampei G."/>
            <person name="Seki Y."/>
            <person name="Sivasundaram S."/>
            <person name="Tagami H."/>
            <person name="Takeda J."/>
            <person name="Takemoto K."/>
            <person name="Takeuchi Y."/>
            <person name="Wada C."/>
            <person name="Yamamoto Y."/>
            <person name="Horiuchi T."/>
        </authorList>
    </citation>
    <scope>NUCLEOTIDE SEQUENCE [LARGE SCALE GENOMIC DNA]</scope>
    <source>
        <strain>K12 / W3110 / ATCC 27325 / DSM 5911</strain>
    </source>
</reference>
<reference key="2">
    <citation type="journal article" date="1997" name="Science">
        <title>The complete genome sequence of Escherichia coli K-12.</title>
        <authorList>
            <person name="Blattner F.R."/>
            <person name="Plunkett G. III"/>
            <person name="Bloch C.A."/>
            <person name="Perna N.T."/>
            <person name="Burland V."/>
            <person name="Riley M."/>
            <person name="Collado-Vides J."/>
            <person name="Glasner J.D."/>
            <person name="Rode C.K."/>
            <person name="Mayhew G.F."/>
            <person name="Gregor J."/>
            <person name="Davis N.W."/>
            <person name="Kirkpatrick H.A."/>
            <person name="Goeden M.A."/>
            <person name="Rose D.J."/>
            <person name="Mau B."/>
            <person name="Shao Y."/>
        </authorList>
    </citation>
    <scope>NUCLEOTIDE SEQUENCE [LARGE SCALE GENOMIC DNA]</scope>
    <source>
        <strain>K12 / MG1655 / ATCC 47076</strain>
    </source>
</reference>
<reference key="3">
    <citation type="journal article" date="2006" name="Mol. Syst. Biol.">
        <title>Highly accurate genome sequences of Escherichia coli K-12 strains MG1655 and W3110.</title>
        <authorList>
            <person name="Hayashi K."/>
            <person name="Morooka N."/>
            <person name="Yamamoto Y."/>
            <person name="Fujita K."/>
            <person name="Isono K."/>
            <person name="Choi S."/>
            <person name="Ohtsubo E."/>
            <person name="Baba T."/>
            <person name="Wanner B.L."/>
            <person name="Mori H."/>
            <person name="Horiuchi T."/>
        </authorList>
    </citation>
    <scope>NUCLEOTIDE SEQUENCE [LARGE SCALE GENOMIC DNA]</scope>
    <source>
        <strain>K12 / W3110 / ATCC 27325 / DSM 5911</strain>
    </source>
</reference>
<reference key="4">
    <citation type="journal article" date="2005" name="J. Bacteriol.">
        <title>Regulation of uptake and processing of the quorum-sensing autoinducer AI-2 in Escherichia coli.</title>
        <authorList>
            <person name="Xavier K.B."/>
            <person name="Bassler B.L."/>
        </authorList>
    </citation>
    <scope>FUNCTION IN AI-2 IMPORT</scope>
    <scope>INDUCTION</scope>
    <source>
        <strain>K12 / MG1655 / ATCC 47076</strain>
    </source>
</reference>
<reference key="5">
    <citation type="journal article" date="2005" name="J. Bacteriol.">
        <title>Cyclic AMP (cAMP) and cAMP receptor protein influence both synthesis and uptake of extracellular autoinducer 2 in Escherichia coli.</title>
        <authorList>
            <person name="Wang L."/>
            <person name="Hashimoto Y."/>
            <person name="Tsao C.-Y."/>
            <person name="Valdes J.J."/>
            <person name="Bentley W.E."/>
        </authorList>
    </citation>
    <scope>INDUCTION</scope>
    <source>
        <strain>K12 / W3110 / ATCC 27325 / DSM 5911</strain>
    </source>
</reference>
<reference key="6">
    <citation type="journal article" date="2005" name="Science">
        <title>Global topology analysis of the Escherichia coli inner membrane proteome.</title>
        <authorList>
            <person name="Daley D.O."/>
            <person name="Rapp M."/>
            <person name="Granseth E."/>
            <person name="Melen K."/>
            <person name="Drew D."/>
            <person name="von Heijne G."/>
        </authorList>
    </citation>
    <scope>TOPOLOGY [LARGE SCALE ANALYSIS]</scope>
    <source>
        <strain>K12 / MG1655 / ATCC 47076</strain>
    </source>
</reference>
<name>LSRD_ECOLI</name>
<sequence>MRIRYGWELALAALLVIEIVAFGAINPRMLDLNMLLFSTSDFICIGIVALPLTMVIVSGGIDISFGSTIGLCAIALGVLFQSGVPMPLAILLTLLLGALCGLINAGLIIYTKVNPLVITLGTLYLFAGSALLLSGMAGATGYEGIGGFPMAFTDFANLDVLGLPVPLIIFLICLLVFWLWLHKTHAGRNVFLIGQSPRVALYSAIPVNRTLCALYAMTGLASAVAAVLLVSYFGSARSDLGASFLMPAITAVVLGGANIYGGSGSIIGTAIAVLLVGYLQQGLQMAGVPNQVSSALSGALLIVVVVGRSVSLHRQQIKEWLARRANNPLP</sequence>
<organism>
    <name type="scientific">Escherichia coli (strain K12)</name>
    <dbReference type="NCBI Taxonomy" id="83333"/>
    <lineage>
        <taxon>Bacteria</taxon>
        <taxon>Pseudomonadati</taxon>
        <taxon>Pseudomonadota</taxon>
        <taxon>Gammaproteobacteria</taxon>
        <taxon>Enterobacterales</taxon>
        <taxon>Enterobacteriaceae</taxon>
        <taxon>Escherichia</taxon>
    </lineage>
</organism>
<feature type="chain" id="PRO_0000060248" description="Autoinducer 2 import system permease protein LsrD">
    <location>
        <begin position="1"/>
        <end position="330"/>
    </location>
</feature>
<feature type="topological domain" description="Cytoplasmic" evidence="1">
    <location>
        <begin position="1"/>
        <end position="4"/>
    </location>
</feature>
<feature type="transmembrane region" description="Helical" evidence="1">
    <location>
        <begin position="5"/>
        <end position="25"/>
    </location>
</feature>
<feature type="topological domain" description="Periplasmic" evidence="1">
    <location>
        <begin position="26"/>
        <end position="42"/>
    </location>
</feature>
<feature type="transmembrane region" description="Helical" evidence="1">
    <location>
        <begin position="43"/>
        <end position="63"/>
    </location>
</feature>
<feature type="topological domain" description="Cytoplasmic" evidence="1">
    <location>
        <begin position="64"/>
        <end position="67"/>
    </location>
</feature>
<feature type="transmembrane region" description="Helical" evidence="1">
    <location>
        <begin position="68"/>
        <end position="88"/>
    </location>
</feature>
<feature type="transmembrane region" description="Helical" evidence="1">
    <location>
        <begin position="89"/>
        <end position="109"/>
    </location>
</feature>
<feature type="topological domain" description="Cytoplasmic" evidence="1">
    <location>
        <begin position="110"/>
        <end position="115"/>
    </location>
</feature>
<feature type="transmembrane region" description="Helical" evidence="1">
    <location>
        <begin position="116"/>
        <end position="136"/>
    </location>
</feature>
<feature type="topological domain" description="Periplasmic" evidence="1">
    <location>
        <begin position="137"/>
        <end position="159"/>
    </location>
</feature>
<feature type="transmembrane region" description="Helical" evidence="1">
    <location>
        <begin position="160"/>
        <end position="180"/>
    </location>
</feature>
<feature type="topological domain" description="Cytoplasmic" evidence="1">
    <location>
        <begin position="181"/>
        <end position="209"/>
    </location>
</feature>
<feature type="transmembrane region" description="Helical" evidence="1">
    <location>
        <begin position="210"/>
        <end position="230"/>
    </location>
</feature>
<feature type="topological domain" description="Periplasmic" evidence="1">
    <location>
        <begin position="231"/>
        <end position="237"/>
    </location>
</feature>
<feature type="transmembrane region" description="Helical" evidence="1">
    <location>
        <begin position="238"/>
        <end position="258"/>
    </location>
</feature>
<feature type="transmembrane region" description="Helical" evidence="1">
    <location>
        <begin position="259"/>
        <end position="279"/>
    </location>
</feature>
<feature type="topological domain" description="Periplasmic" evidence="1">
    <location>
        <begin position="280"/>
        <end position="285"/>
    </location>
</feature>
<feature type="transmembrane region" description="Helical" evidence="1">
    <location>
        <begin position="286"/>
        <end position="306"/>
    </location>
</feature>
<feature type="topological domain" description="Cytoplasmic" evidence="1">
    <location>
        <begin position="307"/>
        <end position="330"/>
    </location>
</feature>
<dbReference type="EMBL" id="U00096">
    <property type="protein sequence ID" value="AAC74588.1"/>
    <property type="molecule type" value="Genomic_DNA"/>
</dbReference>
<dbReference type="EMBL" id="AP009048">
    <property type="protein sequence ID" value="BAA15202.1"/>
    <property type="molecule type" value="Genomic_DNA"/>
</dbReference>
<dbReference type="PIR" id="F64905">
    <property type="entry name" value="F64905"/>
</dbReference>
<dbReference type="RefSeq" id="NP_416032.1">
    <property type="nucleotide sequence ID" value="NC_000913.3"/>
</dbReference>
<dbReference type="RefSeq" id="WP_001222721.1">
    <property type="nucleotide sequence ID" value="NZ_STEB01000003.1"/>
</dbReference>
<dbReference type="BioGRID" id="4259116">
    <property type="interactions" value="6"/>
</dbReference>
<dbReference type="ComplexPortal" id="CPX-4315">
    <property type="entry name" value="Autoinducer-2 ABC transporter complex"/>
</dbReference>
<dbReference type="FunCoup" id="P0AFS1">
    <property type="interactions" value="235"/>
</dbReference>
<dbReference type="STRING" id="511145.b1515"/>
<dbReference type="TCDB" id="3.A.1.2.8">
    <property type="family name" value="the atp-binding cassette (abc) superfamily"/>
</dbReference>
<dbReference type="PaxDb" id="511145-b1515"/>
<dbReference type="EnsemblBacteria" id="AAC74588">
    <property type="protein sequence ID" value="AAC74588"/>
    <property type="gene ID" value="b1515"/>
</dbReference>
<dbReference type="GeneID" id="75202157"/>
<dbReference type="GeneID" id="946264"/>
<dbReference type="KEGG" id="ecj:JW1508"/>
<dbReference type="KEGG" id="eco:b1515"/>
<dbReference type="KEGG" id="ecoc:C3026_08760"/>
<dbReference type="PATRIC" id="fig|1411691.4.peg.752"/>
<dbReference type="EchoBASE" id="EB3569"/>
<dbReference type="eggNOG" id="COG1172">
    <property type="taxonomic scope" value="Bacteria"/>
</dbReference>
<dbReference type="HOGENOM" id="CLU_028880_0_0_6"/>
<dbReference type="InParanoid" id="P0AFS1"/>
<dbReference type="OMA" id="NTVVFQF"/>
<dbReference type="OrthoDB" id="7947581at2"/>
<dbReference type="PhylomeDB" id="P0AFS1"/>
<dbReference type="BioCyc" id="EcoCyc:YDEZ-MONOMER"/>
<dbReference type="BioCyc" id="MetaCyc:YDEZ-MONOMER"/>
<dbReference type="PHI-base" id="PHI:9994"/>
<dbReference type="PRO" id="PR:P0AFS1"/>
<dbReference type="Proteomes" id="UP000000625">
    <property type="component" value="Chromosome"/>
</dbReference>
<dbReference type="GO" id="GO:0055052">
    <property type="term" value="C:ATP-binding cassette (ABC) transporter complex, substrate-binding subunit-containing"/>
    <property type="evidence" value="ECO:0000303"/>
    <property type="project" value="ComplexPortal"/>
</dbReference>
<dbReference type="GO" id="GO:0016020">
    <property type="term" value="C:membrane"/>
    <property type="evidence" value="ECO:0000303"/>
    <property type="project" value="ComplexPortal"/>
</dbReference>
<dbReference type="GO" id="GO:0005886">
    <property type="term" value="C:plasma membrane"/>
    <property type="evidence" value="ECO:0000314"/>
    <property type="project" value="EcoCyc"/>
</dbReference>
<dbReference type="GO" id="GO:0022857">
    <property type="term" value="F:transmembrane transporter activity"/>
    <property type="evidence" value="ECO:0007669"/>
    <property type="project" value="InterPro"/>
</dbReference>
<dbReference type="GO" id="GO:1905887">
    <property type="term" value="P:autoinducer AI-2 transmembrane transport"/>
    <property type="evidence" value="ECO:0000314"/>
    <property type="project" value="EcoCyc"/>
</dbReference>
<dbReference type="GO" id="GO:0009372">
    <property type="term" value="P:quorum sensing"/>
    <property type="evidence" value="ECO:0000303"/>
    <property type="project" value="ComplexPortal"/>
</dbReference>
<dbReference type="CDD" id="cd06579">
    <property type="entry name" value="TM_PBP1_transp_AraH_like"/>
    <property type="match status" value="1"/>
</dbReference>
<dbReference type="InterPro" id="IPR001851">
    <property type="entry name" value="ABC_transp_permease"/>
</dbReference>
<dbReference type="NCBIfam" id="NF011612">
    <property type="entry name" value="PRK15038.1"/>
    <property type="match status" value="1"/>
</dbReference>
<dbReference type="PANTHER" id="PTHR32196">
    <property type="entry name" value="ABC TRANSPORTER PERMEASE PROTEIN YPHD-RELATED-RELATED"/>
    <property type="match status" value="1"/>
</dbReference>
<dbReference type="PANTHER" id="PTHR32196:SF71">
    <property type="entry name" value="AUTOINDUCER 2 IMPORT SYSTEM PERMEASE PROTEIN LSRD"/>
    <property type="match status" value="1"/>
</dbReference>
<dbReference type="Pfam" id="PF02653">
    <property type="entry name" value="BPD_transp_2"/>
    <property type="match status" value="1"/>
</dbReference>
<protein>
    <recommendedName>
        <fullName>Autoinducer 2 import system permease protein LsrD</fullName>
        <shortName>AI-2 import system permease protein LsrD</shortName>
    </recommendedName>
</protein>
<keyword id="KW-0997">Cell inner membrane</keyword>
<keyword id="KW-1003">Cell membrane</keyword>
<keyword id="KW-0472">Membrane</keyword>
<keyword id="KW-1185">Reference proteome</keyword>
<keyword id="KW-0812">Transmembrane</keyword>
<keyword id="KW-1133">Transmembrane helix</keyword>
<keyword id="KW-0813">Transport</keyword>
<gene>
    <name type="primary">lsrD</name>
    <name type="synonym">ydeZ</name>
    <name type="ordered locus">b1515</name>
    <name type="ordered locus">JW1508</name>
</gene>
<accession>P0AFS1</accession>
<accession>P76881</accession>
<accession>P77651</accession>
<comment type="function">
    <text evidence="5">Part of the ABC transporter complex LsrABCD involved in autoinducer 2 (AI-2) import. Probably responsible for the translocation of the substrate across the membrane (Probable).</text>
</comment>
<comment type="subunit">
    <text evidence="4">The complex is composed of two ATP-binding proteins (LsrA), two transmembrane proteins (LsrC and LsrD) and a solute-binding protein (LsrB).</text>
</comment>
<comment type="subcellular location">
    <subcellularLocation>
        <location>Cell inner membrane</location>
        <topology>Multi-pass membrane protein</topology>
    </subcellularLocation>
</comment>
<comment type="induction">
    <text evidence="2 3">In the absence of AI-2, repressed by LsrR. Induced by AI-2, via release of the LsrR repressor. In the absence of glucose, induced by cAMP-CRP by direct binding to the upstream region of the lsr promoter.</text>
</comment>
<comment type="similarity">
    <text evidence="4">Belongs to the binding-protein-dependent transport system permease family. AraH/RbsC subfamily.</text>
</comment>
<evidence type="ECO:0000255" key="1"/>
<evidence type="ECO:0000269" key="2">
    <source>
    </source>
</evidence>
<evidence type="ECO:0000269" key="3">
    <source>
    </source>
</evidence>
<evidence type="ECO:0000305" key="4"/>
<evidence type="ECO:0000305" key="5">
    <source>
    </source>
</evidence>
<proteinExistence type="evidence at protein level"/>